<sequence>MQDNVPASGGGPSRLFILRPVATTLLMIAILLAGIIGYRALPVSALPEVDYPTIQVITLYPGASPDVVTSAITAPLERQFGQMSGLKQMSTQSAGGASVITLQFQLELSLDVAEQDVQAAINAASNLLPNDLPYPPTYSKVNPADPPIMTLAVTSSAMSMTQVQDMVDNRIAQKISQVAGVGLVSLAGGQRPAVRVRLNAPALAAYGLTSETIRTAITAANVNSAKGSLDGPTRSVTLSANDQMKSVDDYRKLIVAWKNGAPVRLQDVATIEQAAENIYLGAWANRQQAIIINVQRQPGANVITTTDSINKMLPALKASLPNSVEVATLTDRTTSIRASVKDVQFELLLAIALVVMVIYLFLRNAVATLIPSIAVPLSLVGTFAAMYFLGFSINNLTLMALTIATGFVVDDAIVVIENIARYIEKGEKPLNAALKGAGEIGFTIISLTFSLIAVLIPLLFMGDIVGRLFREFAVTLAVSILISAVVSLTLTPMMCARMLSHQSLRKQNRFTRASERFFTRLIDTYGTWLRKVLNHPWLTLSVALGTLLLTILLYIWIPKGFFPIQDNGIIQGTVQAPQTVSFSNMADRQQRVASIIMKDPTVESVSSFIGVDGTNAALNSGRLQINLKPLSERSERIPEIISRLQQQTAQIPGIQLYLQPVQDLTIDTQISRTQYQFTLQAMSLDELSVWVPKLMTELKKLPQLEDVSSDWQDGAAVAYVNVDRDSASRLGITMSQVDSALYNAFGQRLVSTIYTQASQYRVVLEHDTTNNTGLDALNDVRLISSDGGTIPLSSIATIEERQGPLAINHIDQFPSTTISFNVASGYALGEAVDAITQAEQQMNLPADITTRFQGSTLAFQSALSSTVWLIVAAIVAMYIVLGVLYESFIHPITILSTLPTAGVGALLALMMAGKDLDVIAIIGIILLIGIVKKNAIMMIDFALAAEREQGMKPYDAIYQACLLRFRPILMTTMAALLSALPLMLSTGVGAELRQPLGVCMVGGLIMSQILTLFTTPVIYLLFDRLATRFRRVPRQEEETE</sequence>
<proteinExistence type="inferred from homology"/>
<organism>
    <name type="scientific">Pectobacterium atrosepticum (strain SCRI 1043 / ATCC BAA-672)</name>
    <name type="common">Erwinia carotovora subsp. atroseptica</name>
    <dbReference type="NCBI Taxonomy" id="218491"/>
    <lineage>
        <taxon>Bacteria</taxon>
        <taxon>Pseudomonadati</taxon>
        <taxon>Pseudomonadota</taxon>
        <taxon>Gammaproteobacteria</taxon>
        <taxon>Enterobacterales</taxon>
        <taxon>Pectobacteriaceae</taxon>
        <taxon>Pectobacterium</taxon>
    </lineage>
</organism>
<protein>
    <recommendedName>
        <fullName evidence="1">Multidrug resistance protein MdtB</fullName>
    </recommendedName>
    <alternativeName>
        <fullName evidence="1">Multidrug transporter MdtB</fullName>
    </alternativeName>
</protein>
<feature type="chain" id="PRO_0000161824" description="Multidrug resistance protein MdtB">
    <location>
        <begin position="1"/>
        <end position="1040"/>
    </location>
</feature>
<feature type="transmembrane region" description="Helical" evidence="1">
    <location>
        <begin position="15"/>
        <end position="37"/>
    </location>
</feature>
<feature type="transmembrane region" description="Helical" evidence="1">
    <location>
        <begin position="343"/>
        <end position="365"/>
    </location>
</feature>
<feature type="transmembrane region" description="Helical" evidence="1">
    <location>
        <begin position="369"/>
        <end position="391"/>
    </location>
</feature>
<feature type="transmembrane region" description="Helical" evidence="1">
    <location>
        <begin position="398"/>
        <end position="420"/>
    </location>
</feature>
<feature type="transmembrane region" description="Helical" evidence="1">
    <location>
        <begin position="440"/>
        <end position="462"/>
    </location>
</feature>
<feature type="transmembrane region" description="Helical" evidence="1">
    <location>
        <begin position="474"/>
        <end position="496"/>
    </location>
</feature>
<feature type="transmembrane region" description="Helical" evidence="1">
    <location>
        <begin position="535"/>
        <end position="557"/>
    </location>
</feature>
<feature type="transmembrane region" description="Helical" evidence="1">
    <location>
        <begin position="867"/>
        <end position="889"/>
    </location>
</feature>
<feature type="transmembrane region" description="Helical" evidence="1">
    <location>
        <begin position="909"/>
        <end position="931"/>
    </location>
</feature>
<feature type="transmembrane region" description="Helical" evidence="1">
    <location>
        <begin position="968"/>
        <end position="990"/>
    </location>
</feature>
<feature type="transmembrane region" description="Helical" evidence="1">
    <location>
        <begin position="1000"/>
        <end position="1022"/>
    </location>
</feature>
<dbReference type="EMBL" id="BX950851">
    <property type="protein sequence ID" value="CAG76083.1"/>
    <property type="molecule type" value="Genomic_DNA"/>
</dbReference>
<dbReference type="RefSeq" id="WP_011094707.1">
    <property type="nucleotide sequence ID" value="NC_004547.2"/>
</dbReference>
<dbReference type="SMR" id="Q6D2B1"/>
<dbReference type="STRING" id="218491.ECA3185"/>
<dbReference type="KEGG" id="eca:ECA3185"/>
<dbReference type="PATRIC" id="fig|218491.5.peg.3226"/>
<dbReference type="eggNOG" id="COG0841">
    <property type="taxonomic scope" value="Bacteria"/>
</dbReference>
<dbReference type="HOGENOM" id="CLU_002755_1_2_6"/>
<dbReference type="OrthoDB" id="9757904at2"/>
<dbReference type="Proteomes" id="UP000007966">
    <property type="component" value="Chromosome"/>
</dbReference>
<dbReference type="GO" id="GO:0005886">
    <property type="term" value="C:plasma membrane"/>
    <property type="evidence" value="ECO:0007669"/>
    <property type="project" value="UniProtKB-SubCell"/>
</dbReference>
<dbReference type="GO" id="GO:0042910">
    <property type="term" value="F:xenobiotic transmembrane transporter activity"/>
    <property type="evidence" value="ECO:0007669"/>
    <property type="project" value="TreeGrafter"/>
</dbReference>
<dbReference type="FunFam" id="1.20.1640.10:FF:000001">
    <property type="entry name" value="Efflux pump membrane transporter"/>
    <property type="match status" value="1"/>
</dbReference>
<dbReference type="FunFam" id="3.30.70.1430:FF:000001">
    <property type="entry name" value="Efflux pump membrane transporter"/>
    <property type="match status" value="1"/>
</dbReference>
<dbReference type="Gene3D" id="3.30.70.1430">
    <property type="entry name" value="Multidrug efflux transporter AcrB pore domain"/>
    <property type="match status" value="2"/>
</dbReference>
<dbReference type="Gene3D" id="3.30.70.1440">
    <property type="entry name" value="Multidrug efflux transporter AcrB pore domain"/>
    <property type="match status" value="1"/>
</dbReference>
<dbReference type="Gene3D" id="3.30.70.1320">
    <property type="entry name" value="Multidrug efflux transporter AcrB pore domain like"/>
    <property type="match status" value="1"/>
</dbReference>
<dbReference type="Gene3D" id="3.30.2090.10">
    <property type="entry name" value="Multidrug efflux transporter AcrB TolC docking domain, DN and DC subdomains"/>
    <property type="match status" value="2"/>
</dbReference>
<dbReference type="Gene3D" id="1.20.1640.10">
    <property type="entry name" value="Multidrug efflux transporter AcrB transmembrane domain"/>
    <property type="match status" value="2"/>
</dbReference>
<dbReference type="HAMAP" id="MF_01423">
    <property type="entry name" value="MdtB"/>
    <property type="match status" value="1"/>
</dbReference>
<dbReference type="InterPro" id="IPR027463">
    <property type="entry name" value="AcrB_DN_DC_subdom"/>
</dbReference>
<dbReference type="InterPro" id="IPR001036">
    <property type="entry name" value="Acrflvin-R"/>
</dbReference>
<dbReference type="InterPro" id="IPR022831">
    <property type="entry name" value="Multidrug-R_MdtB"/>
</dbReference>
<dbReference type="NCBIfam" id="NF007798">
    <property type="entry name" value="PRK10503.1"/>
    <property type="match status" value="1"/>
</dbReference>
<dbReference type="NCBIfam" id="NF033617">
    <property type="entry name" value="RND_permease_2"/>
    <property type="match status" value="1"/>
</dbReference>
<dbReference type="PANTHER" id="PTHR32063">
    <property type="match status" value="1"/>
</dbReference>
<dbReference type="PANTHER" id="PTHR32063:SF21">
    <property type="entry name" value="MULTIDRUG RESISTANCE PROTEIN MDTB"/>
    <property type="match status" value="1"/>
</dbReference>
<dbReference type="Pfam" id="PF00873">
    <property type="entry name" value="ACR_tran"/>
    <property type="match status" value="1"/>
</dbReference>
<dbReference type="PRINTS" id="PR00702">
    <property type="entry name" value="ACRIFLAVINRP"/>
</dbReference>
<dbReference type="SUPFAM" id="SSF82693">
    <property type="entry name" value="Multidrug efflux transporter AcrB pore domain, PN1, PN2, PC1 and PC2 subdomains"/>
    <property type="match status" value="3"/>
</dbReference>
<dbReference type="SUPFAM" id="SSF82714">
    <property type="entry name" value="Multidrug efflux transporter AcrB TolC docking domain, DN and DC subdomains"/>
    <property type="match status" value="2"/>
</dbReference>
<dbReference type="SUPFAM" id="SSF82866">
    <property type="entry name" value="Multidrug efflux transporter AcrB transmembrane domain"/>
    <property type="match status" value="2"/>
</dbReference>
<evidence type="ECO:0000255" key="1">
    <source>
        <dbReference type="HAMAP-Rule" id="MF_01423"/>
    </source>
</evidence>
<accession>Q6D2B1</accession>
<name>MDTB_PECAS</name>
<comment type="subunit">
    <text evidence="1">Part of a tripartite efflux system composed of MdtA, MdtB and MdtC. MdtB forms a heteromultimer with MdtC.</text>
</comment>
<comment type="subcellular location">
    <subcellularLocation>
        <location evidence="1">Cell inner membrane</location>
        <topology evidence="1">Multi-pass membrane protein</topology>
    </subcellularLocation>
</comment>
<comment type="similarity">
    <text evidence="1">Belongs to the resistance-nodulation-cell division (RND) (TC 2.A.6) family. MdtB subfamily.</text>
</comment>
<keyword id="KW-0997">Cell inner membrane</keyword>
<keyword id="KW-1003">Cell membrane</keyword>
<keyword id="KW-0472">Membrane</keyword>
<keyword id="KW-1185">Reference proteome</keyword>
<keyword id="KW-0812">Transmembrane</keyword>
<keyword id="KW-1133">Transmembrane helix</keyword>
<keyword id="KW-0813">Transport</keyword>
<reference key="1">
    <citation type="journal article" date="2004" name="Proc. Natl. Acad. Sci. U.S.A.">
        <title>Genome sequence of the enterobacterial phytopathogen Erwinia carotovora subsp. atroseptica and characterization of virulence factors.</title>
        <authorList>
            <person name="Bell K.S."/>
            <person name="Sebaihia M."/>
            <person name="Pritchard L."/>
            <person name="Holden M.T.G."/>
            <person name="Hyman L.J."/>
            <person name="Holeva M.C."/>
            <person name="Thomson N.R."/>
            <person name="Bentley S.D."/>
            <person name="Churcher L.J.C."/>
            <person name="Mungall K."/>
            <person name="Atkin R."/>
            <person name="Bason N."/>
            <person name="Brooks K."/>
            <person name="Chillingworth T."/>
            <person name="Clark K."/>
            <person name="Doggett J."/>
            <person name="Fraser A."/>
            <person name="Hance Z."/>
            <person name="Hauser H."/>
            <person name="Jagels K."/>
            <person name="Moule S."/>
            <person name="Norbertczak H."/>
            <person name="Ormond D."/>
            <person name="Price C."/>
            <person name="Quail M.A."/>
            <person name="Sanders M."/>
            <person name="Walker D."/>
            <person name="Whitehead S."/>
            <person name="Salmond G.P.C."/>
            <person name="Birch P.R.J."/>
            <person name="Parkhill J."/>
            <person name="Toth I.K."/>
        </authorList>
    </citation>
    <scope>NUCLEOTIDE SEQUENCE [LARGE SCALE GENOMIC DNA]</scope>
    <source>
        <strain>SCRI 1043 / ATCC BAA-672</strain>
    </source>
</reference>
<gene>
    <name evidence="1" type="primary">mdtB</name>
    <name type="ordered locus">ECA3185</name>
</gene>